<name>COBB_BRUAB</name>
<feature type="chain" id="PRO_1000002288" description="Hydrogenobyrinate a,c-diamide synthase">
    <location>
        <begin position="1"/>
        <end position="436"/>
    </location>
</feature>
<feature type="domain" description="GATase cobBQ-type" evidence="1">
    <location>
        <begin position="244"/>
        <end position="435"/>
    </location>
</feature>
<feature type="active site" description="Nucleophile" evidence="1">
    <location>
        <position position="327"/>
    </location>
</feature>
<feature type="site" description="Increases nucleophilicity of active site Cys" evidence="1">
    <location>
        <position position="427"/>
    </location>
</feature>
<sequence length="436" mass="47034">MKGFMIAAPASGSGKTTVTLGLLRALKRRGEVLAPVKAGPDYIDPAYHRAASGVDCFNLDPWAMRPELISALSSRMTESGARVLVAEGMMGLFDGAIDGKGSSADLARLLDLPVVLVVDCARQSHSIAALVWGFSQFRKDVLIEGVILNRVGSPRHEAMLRGALAPLGVPVLGALPRDPALSLPERHLGLVQADEHAGLESFLEQAADVMEAHIDMDALQTIWLRPKRYDAMANVARLKPLGNRIAVARDDAFAFAYMHLFEGWRRRGAEISFFSPLADEAPKADADAIYLPGGYPELHAQRLAGASRFRTAIGDAAARGVTVYGECGGYMVLGKTLEDAAGVHHPMLGLLPLETSFARRKLHLGYRLLEPLGGLPWDMPLKAHEFHYASIVREEKADRLFRVRDASGENLGEAGLRVGSVSGSFMHVIDFSGEAA</sequence>
<gene>
    <name evidence="1" type="primary">cobB</name>
    <name type="ordered locus">BruAb1_1297</name>
</gene>
<dbReference type="EC" id="6.3.5.9" evidence="1"/>
<dbReference type="EMBL" id="AE017223">
    <property type="protein sequence ID" value="AAX74632.1"/>
    <property type="molecule type" value="Genomic_DNA"/>
</dbReference>
<dbReference type="RefSeq" id="WP_002964414.1">
    <property type="nucleotide sequence ID" value="NC_006932.1"/>
</dbReference>
<dbReference type="SMR" id="Q57CK2"/>
<dbReference type="EnsemblBacteria" id="AAX74632">
    <property type="protein sequence ID" value="AAX74632"/>
    <property type="gene ID" value="BruAb1_1297"/>
</dbReference>
<dbReference type="KEGG" id="bmb:BruAb1_1297"/>
<dbReference type="HOGENOM" id="CLU_022752_0_0_5"/>
<dbReference type="UniPathway" id="UPA00148">
    <property type="reaction ID" value="UER00220"/>
</dbReference>
<dbReference type="PRO" id="PR:Q57CK2"/>
<dbReference type="Proteomes" id="UP000000540">
    <property type="component" value="Chromosome I"/>
</dbReference>
<dbReference type="GO" id="GO:0005524">
    <property type="term" value="F:ATP binding"/>
    <property type="evidence" value="ECO:0007669"/>
    <property type="project" value="UniProtKB-UniRule"/>
</dbReference>
<dbReference type="GO" id="GO:0042242">
    <property type="term" value="F:cobyrinic acid a,c-diamide synthase activity"/>
    <property type="evidence" value="ECO:0007669"/>
    <property type="project" value="InterPro"/>
</dbReference>
<dbReference type="GO" id="GO:0043802">
    <property type="term" value="F:hydrogenobyrinic acid a,c-diamide synthase (glutamine-hydrolysing) activity"/>
    <property type="evidence" value="ECO:0007669"/>
    <property type="project" value="UniProtKB-UniRule"/>
</dbReference>
<dbReference type="GO" id="GO:0009236">
    <property type="term" value="P:cobalamin biosynthetic process"/>
    <property type="evidence" value="ECO:0007669"/>
    <property type="project" value="UniProtKB-UniRule"/>
</dbReference>
<dbReference type="Gene3D" id="3.40.50.880">
    <property type="match status" value="1"/>
</dbReference>
<dbReference type="Gene3D" id="3.40.50.300">
    <property type="entry name" value="P-loop containing nucleotide triphosphate hydrolases"/>
    <property type="match status" value="1"/>
</dbReference>
<dbReference type="HAMAP" id="MF_00027">
    <property type="entry name" value="CobB_CbiA"/>
    <property type="match status" value="1"/>
</dbReference>
<dbReference type="InterPro" id="IPR004484">
    <property type="entry name" value="CbiA/CobB_synth"/>
</dbReference>
<dbReference type="InterPro" id="IPR029062">
    <property type="entry name" value="Class_I_gatase-like"/>
</dbReference>
<dbReference type="InterPro" id="IPR002586">
    <property type="entry name" value="CobQ/CobB/MinD/ParA_Nub-bd_dom"/>
</dbReference>
<dbReference type="InterPro" id="IPR011698">
    <property type="entry name" value="GATase_3"/>
</dbReference>
<dbReference type="InterPro" id="IPR027417">
    <property type="entry name" value="P-loop_NTPase"/>
</dbReference>
<dbReference type="NCBIfam" id="TIGR00379">
    <property type="entry name" value="cobB"/>
    <property type="match status" value="1"/>
</dbReference>
<dbReference type="NCBIfam" id="NF002204">
    <property type="entry name" value="PRK01077.1"/>
    <property type="match status" value="1"/>
</dbReference>
<dbReference type="PANTHER" id="PTHR43873">
    <property type="entry name" value="COBYRINATE A,C-DIAMIDE SYNTHASE"/>
    <property type="match status" value="1"/>
</dbReference>
<dbReference type="PANTHER" id="PTHR43873:SF1">
    <property type="entry name" value="COBYRINATE A,C-DIAMIDE SYNTHASE"/>
    <property type="match status" value="1"/>
</dbReference>
<dbReference type="Pfam" id="PF01656">
    <property type="entry name" value="CbiA"/>
    <property type="match status" value="1"/>
</dbReference>
<dbReference type="Pfam" id="PF07685">
    <property type="entry name" value="GATase_3"/>
    <property type="match status" value="1"/>
</dbReference>
<dbReference type="SUPFAM" id="SSF52317">
    <property type="entry name" value="Class I glutamine amidotransferase-like"/>
    <property type="match status" value="1"/>
</dbReference>
<dbReference type="SUPFAM" id="SSF52540">
    <property type="entry name" value="P-loop containing nucleoside triphosphate hydrolases"/>
    <property type="match status" value="1"/>
</dbReference>
<dbReference type="PROSITE" id="PS51274">
    <property type="entry name" value="GATASE_COBBQ"/>
    <property type="match status" value="1"/>
</dbReference>
<keyword id="KW-0067">ATP-binding</keyword>
<keyword id="KW-0169">Cobalamin biosynthesis</keyword>
<keyword id="KW-0315">Glutamine amidotransferase</keyword>
<keyword id="KW-0436">Ligase</keyword>
<keyword id="KW-0460">Magnesium</keyword>
<keyword id="KW-0547">Nucleotide-binding</keyword>
<protein>
    <recommendedName>
        <fullName evidence="1">Hydrogenobyrinate a,c-diamide synthase</fullName>
        <ecNumber evidence="1">6.3.5.9</ecNumber>
    </recommendedName>
    <alternativeName>
        <fullName evidence="1">Hydrogenobyrinic acid a,c-diamide synthase</fullName>
    </alternativeName>
</protein>
<organism>
    <name type="scientific">Brucella abortus biovar 1 (strain 9-941)</name>
    <dbReference type="NCBI Taxonomy" id="262698"/>
    <lineage>
        <taxon>Bacteria</taxon>
        <taxon>Pseudomonadati</taxon>
        <taxon>Pseudomonadota</taxon>
        <taxon>Alphaproteobacteria</taxon>
        <taxon>Hyphomicrobiales</taxon>
        <taxon>Brucellaceae</taxon>
        <taxon>Brucella/Ochrobactrum group</taxon>
        <taxon>Brucella</taxon>
    </lineage>
</organism>
<reference key="1">
    <citation type="journal article" date="2005" name="J. Bacteriol.">
        <title>Completion of the genome sequence of Brucella abortus and comparison to the highly similar genomes of Brucella melitensis and Brucella suis.</title>
        <authorList>
            <person name="Halling S.M."/>
            <person name="Peterson-Burch B.D."/>
            <person name="Bricker B.J."/>
            <person name="Zuerner R.L."/>
            <person name="Qing Z."/>
            <person name="Li L.-L."/>
            <person name="Kapur V."/>
            <person name="Alt D.P."/>
            <person name="Olsen S.C."/>
        </authorList>
    </citation>
    <scope>NUCLEOTIDE SEQUENCE [LARGE SCALE GENOMIC DNA]</scope>
    <source>
        <strain>9-941</strain>
    </source>
</reference>
<evidence type="ECO:0000255" key="1">
    <source>
        <dbReference type="HAMAP-Rule" id="MF_00027"/>
    </source>
</evidence>
<proteinExistence type="inferred from homology"/>
<accession>Q57CK2</accession>
<comment type="function">
    <text evidence="1">Catalyzes the ATP-dependent amidation of the two carboxylate groups at positions a and c of hydrogenobyrinate, using either L-glutamine or ammonia as the nitrogen source.</text>
</comment>
<comment type="catalytic activity">
    <reaction evidence="1">
        <text>hydrogenobyrinate + 2 L-glutamine + 2 ATP + 2 H2O = hydrogenobyrinate a,c-diamide + 2 L-glutamate + 2 ADP + 2 phosphate + 2 H(+)</text>
        <dbReference type="Rhea" id="RHEA:12544"/>
        <dbReference type="ChEBI" id="CHEBI:15377"/>
        <dbReference type="ChEBI" id="CHEBI:15378"/>
        <dbReference type="ChEBI" id="CHEBI:29985"/>
        <dbReference type="ChEBI" id="CHEBI:30616"/>
        <dbReference type="ChEBI" id="CHEBI:43474"/>
        <dbReference type="ChEBI" id="CHEBI:58359"/>
        <dbReference type="ChEBI" id="CHEBI:77873"/>
        <dbReference type="ChEBI" id="CHEBI:77874"/>
        <dbReference type="ChEBI" id="CHEBI:456216"/>
        <dbReference type="EC" id="6.3.5.9"/>
    </reaction>
</comment>
<comment type="cofactor">
    <cofactor evidence="1">
        <name>Mg(2+)</name>
        <dbReference type="ChEBI" id="CHEBI:18420"/>
    </cofactor>
</comment>
<comment type="pathway">
    <text evidence="1">Cofactor biosynthesis; adenosylcobalamin biosynthesis; cob(II)yrinate a,c-diamide from precorrin-2 (aerobic route): step 9/10.</text>
</comment>
<comment type="domain">
    <text evidence="1">Comprises of two domains. The C-terminal domain contains the binding site for glutamine and catalyzes the hydrolysis of this substrate to glutamate and ammonia. The N-terminal domain is anticipated to bind ATP and hydrogenobyrinate and catalyzes the ultimate synthesis of the diamide product. The ammonia produced via the glutaminase domain is probably translocated to the adjacent domain via a molecular tunnel, where it reacts with an activated intermediate.</text>
</comment>
<comment type="miscellaneous">
    <text evidence="1">The a and c carboxylates of hydrogenobyrinate are activated for nucleophilic attack via formation of a phosphorylated intermediate by ATP. CobB catalyzes first the amidation of the c-carboxylate, and then that of the a-carboxylate.</text>
</comment>
<comment type="similarity">
    <text evidence="1">Belongs to the CobB/CbiA family.</text>
</comment>